<dbReference type="EMBL" id="AF124093">
    <property type="protein sequence ID" value="AAD17316.1"/>
    <property type="molecule type" value="mRNA"/>
</dbReference>
<dbReference type="RefSeq" id="NP_001075241.1">
    <property type="nucleotide sequence ID" value="NM_001081772.1"/>
</dbReference>
<dbReference type="SMR" id="Q9TV98"/>
<dbReference type="FunCoup" id="Q9TV98">
    <property type="interactions" value="222"/>
</dbReference>
<dbReference type="STRING" id="9796.ENSECAP00000020141"/>
<dbReference type="GlyCosmos" id="Q9TV98">
    <property type="glycosylation" value="2 sites, No reported glycans"/>
</dbReference>
<dbReference type="PaxDb" id="9796-ENSECAP00000020141"/>
<dbReference type="GeneID" id="791249"/>
<dbReference type="KEGG" id="ecb:791249"/>
<dbReference type="CTD" id="2099"/>
<dbReference type="InParanoid" id="Q9TV98"/>
<dbReference type="OrthoDB" id="5799427at2759"/>
<dbReference type="Proteomes" id="UP000002281">
    <property type="component" value="Unplaced"/>
</dbReference>
<dbReference type="GO" id="GO:0000785">
    <property type="term" value="C:chromatin"/>
    <property type="evidence" value="ECO:0000318"/>
    <property type="project" value="GO_Central"/>
</dbReference>
<dbReference type="GO" id="GO:0005737">
    <property type="term" value="C:cytoplasm"/>
    <property type="evidence" value="ECO:0000250"/>
    <property type="project" value="UniProtKB"/>
</dbReference>
<dbReference type="GO" id="GO:0005794">
    <property type="term" value="C:Golgi apparatus"/>
    <property type="evidence" value="ECO:0007669"/>
    <property type="project" value="UniProtKB-SubCell"/>
</dbReference>
<dbReference type="GO" id="GO:0005634">
    <property type="term" value="C:nucleus"/>
    <property type="evidence" value="ECO:0000250"/>
    <property type="project" value="UniProtKB"/>
</dbReference>
<dbReference type="GO" id="GO:0005886">
    <property type="term" value="C:plasma membrane"/>
    <property type="evidence" value="ECO:0007669"/>
    <property type="project" value="UniProtKB-SubCell"/>
</dbReference>
<dbReference type="GO" id="GO:0034056">
    <property type="term" value="F:estrogen response element binding"/>
    <property type="evidence" value="ECO:0000318"/>
    <property type="project" value="GO_Central"/>
</dbReference>
<dbReference type="GO" id="GO:0030284">
    <property type="term" value="F:nuclear estrogen receptor activity"/>
    <property type="evidence" value="ECO:0007669"/>
    <property type="project" value="InterPro"/>
</dbReference>
<dbReference type="GO" id="GO:0004879">
    <property type="term" value="F:nuclear receptor activity"/>
    <property type="evidence" value="ECO:0000318"/>
    <property type="project" value="GO_Central"/>
</dbReference>
<dbReference type="GO" id="GO:0043565">
    <property type="term" value="F:sequence-specific DNA binding"/>
    <property type="evidence" value="ECO:0000250"/>
    <property type="project" value="UniProtKB"/>
</dbReference>
<dbReference type="GO" id="GO:0005496">
    <property type="term" value="F:steroid binding"/>
    <property type="evidence" value="ECO:0000250"/>
    <property type="project" value="UniProtKB"/>
</dbReference>
<dbReference type="GO" id="GO:0008270">
    <property type="term" value="F:zinc ion binding"/>
    <property type="evidence" value="ECO:0007669"/>
    <property type="project" value="UniProtKB-KW"/>
</dbReference>
<dbReference type="GO" id="GO:0071392">
    <property type="term" value="P:cellular response to estradiol stimulus"/>
    <property type="evidence" value="ECO:0000250"/>
    <property type="project" value="UniProtKB"/>
</dbReference>
<dbReference type="GO" id="GO:0071391">
    <property type="term" value="P:cellular response to estrogen stimulus"/>
    <property type="evidence" value="ECO:0000318"/>
    <property type="project" value="GO_Central"/>
</dbReference>
<dbReference type="GO" id="GO:0030520">
    <property type="term" value="P:estrogen receptor signaling pathway"/>
    <property type="evidence" value="ECO:0000318"/>
    <property type="project" value="GO_Central"/>
</dbReference>
<dbReference type="GO" id="GO:0043124">
    <property type="term" value="P:negative regulation of canonical NF-kappaB signal transduction"/>
    <property type="evidence" value="ECO:0000250"/>
    <property type="project" value="UniProtKB"/>
</dbReference>
<dbReference type="GO" id="GO:0043433">
    <property type="term" value="P:negative regulation of DNA-binding transcription factor activity"/>
    <property type="evidence" value="ECO:0000250"/>
    <property type="project" value="UniProtKB"/>
</dbReference>
<dbReference type="GO" id="GO:0034392">
    <property type="term" value="P:negative regulation of smooth muscle cell apoptotic process"/>
    <property type="evidence" value="ECO:0000250"/>
    <property type="project" value="UniProtKB"/>
</dbReference>
<dbReference type="GO" id="GO:0030518">
    <property type="term" value="P:nuclear receptor-mediated steroid hormone signaling pathway"/>
    <property type="evidence" value="ECO:0000250"/>
    <property type="project" value="UniProtKB"/>
</dbReference>
<dbReference type="GO" id="GO:0007200">
    <property type="term" value="P:phospholipase C-activating G protein-coupled receptor signaling pathway"/>
    <property type="evidence" value="ECO:0000250"/>
    <property type="project" value="UniProtKB"/>
</dbReference>
<dbReference type="GO" id="GO:0007204">
    <property type="term" value="P:positive regulation of cytosolic calcium ion concentration"/>
    <property type="evidence" value="ECO:0000250"/>
    <property type="project" value="UniProtKB"/>
</dbReference>
<dbReference type="GO" id="GO:0051091">
    <property type="term" value="P:positive regulation of DNA-binding transcription factor activity"/>
    <property type="evidence" value="ECO:0000250"/>
    <property type="project" value="UniProtKB"/>
</dbReference>
<dbReference type="GO" id="GO:0045893">
    <property type="term" value="P:positive regulation of DNA-templated transcription"/>
    <property type="evidence" value="ECO:0000250"/>
    <property type="project" value="UniProtKB"/>
</dbReference>
<dbReference type="GO" id="GO:0045429">
    <property type="term" value="P:positive regulation of nitric oxide biosynthetic process"/>
    <property type="evidence" value="ECO:0000250"/>
    <property type="project" value="UniProtKB"/>
</dbReference>
<dbReference type="GO" id="GO:0051000">
    <property type="term" value="P:positive regulation of nitric-oxide synthase activity"/>
    <property type="evidence" value="ECO:0000250"/>
    <property type="project" value="UniProtKB"/>
</dbReference>
<dbReference type="GO" id="GO:0006357">
    <property type="term" value="P:regulation of transcription by RNA polymerase II"/>
    <property type="evidence" value="ECO:0000318"/>
    <property type="project" value="GO_Central"/>
</dbReference>
<dbReference type="CDD" id="cd07171">
    <property type="entry name" value="NR_DBD_ER"/>
    <property type="match status" value="1"/>
</dbReference>
<dbReference type="CDD" id="cd06949">
    <property type="entry name" value="NR_LBD_ER"/>
    <property type="match status" value="1"/>
</dbReference>
<dbReference type="FunFam" id="1.10.565.10:FF:000010">
    <property type="entry name" value="Estrogen receptor"/>
    <property type="match status" value="1"/>
</dbReference>
<dbReference type="FunFam" id="3.30.50.10:FF:000014">
    <property type="entry name" value="Estrogen receptor beta"/>
    <property type="match status" value="1"/>
</dbReference>
<dbReference type="Gene3D" id="3.30.50.10">
    <property type="entry name" value="Erythroid Transcription Factor GATA-1, subunit A"/>
    <property type="match status" value="1"/>
</dbReference>
<dbReference type="Gene3D" id="1.10.565.10">
    <property type="entry name" value="Retinoid X Receptor"/>
    <property type="match status" value="1"/>
</dbReference>
<dbReference type="InterPro" id="IPR024178">
    <property type="entry name" value="Est_rcpt/est-rel_rcp"/>
</dbReference>
<dbReference type="InterPro" id="IPR001292">
    <property type="entry name" value="Estr_rcpt"/>
</dbReference>
<dbReference type="InterPro" id="IPR046944">
    <property type="entry name" value="Estr_rcpt_N"/>
</dbReference>
<dbReference type="InterPro" id="IPR035500">
    <property type="entry name" value="NHR-like_dom_sf"/>
</dbReference>
<dbReference type="InterPro" id="IPR000536">
    <property type="entry name" value="Nucl_hrmn_rcpt_lig-bd"/>
</dbReference>
<dbReference type="InterPro" id="IPR050200">
    <property type="entry name" value="Nuclear_hormone_rcpt_NR3"/>
</dbReference>
<dbReference type="InterPro" id="IPR001723">
    <property type="entry name" value="Nuclear_hrmn_rcpt"/>
</dbReference>
<dbReference type="InterPro" id="IPR024736">
    <property type="entry name" value="Oestrogen-typ_rcpt_final_C_dom"/>
</dbReference>
<dbReference type="InterPro" id="IPR001628">
    <property type="entry name" value="Znf_hrmn_rcpt"/>
</dbReference>
<dbReference type="InterPro" id="IPR013088">
    <property type="entry name" value="Znf_NHR/GATA"/>
</dbReference>
<dbReference type="PANTHER" id="PTHR48092">
    <property type="entry name" value="KNIRPS-RELATED PROTEIN-RELATED"/>
    <property type="match status" value="1"/>
</dbReference>
<dbReference type="Pfam" id="PF12743">
    <property type="entry name" value="ESR1_C"/>
    <property type="match status" value="1"/>
</dbReference>
<dbReference type="Pfam" id="PF00104">
    <property type="entry name" value="Hormone_recep"/>
    <property type="match status" value="1"/>
</dbReference>
<dbReference type="Pfam" id="PF02159">
    <property type="entry name" value="Oest_recep"/>
    <property type="match status" value="1"/>
</dbReference>
<dbReference type="Pfam" id="PF00105">
    <property type="entry name" value="zf-C4"/>
    <property type="match status" value="1"/>
</dbReference>
<dbReference type="PIRSF" id="PIRSF500101">
    <property type="entry name" value="ER-a"/>
    <property type="match status" value="1"/>
</dbReference>
<dbReference type="PIRSF" id="PIRSF002527">
    <property type="entry name" value="ER-like_NR"/>
    <property type="match status" value="1"/>
</dbReference>
<dbReference type="PRINTS" id="PR00543">
    <property type="entry name" value="OESTROGENR"/>
</dbReference>
<dbReference type="PRINTS" id="PR00398">
    <property type="entry name" value="STRDHORMONER"/>
</dbReference>
<dbReference type="PRINTS" id="PR00047">
    <property type="entry name" value="STROIDFINGER"/>
</dbReference>
<dbReference type="SMART" id="SM00430">
    <property type="entry name" value="HOLI"/>
    <property type="match status" value="1"/>
</dbReference>
<dbReference type="SMART" id="SM00399">
    <property type="entry name" value="ZnF_C4"/>
    <property type="match status" value="1"/>
</dbReference>
<dbReference type="SUPFAM" id="SSF57716">
    <property type="entry name" value="Glucocorticoid receptor-like (DNA-binding domain)"/>
    <property type="match status" value="1"/>
</dbReference>
<dbReference type="SUPFAM" id="SSF48508">
    <property type="entry name" value="Nuclear receptor ligand-binding domain"/>
    <property type="match status" value="1"/>
</dbReference>
<dbReference type="PROSITE" id="PS51843">
    <property type="entry name" value="NR_LBD"/>
    <property type="match status" value="1"/>
</dbReference>
<dbReference type="PROSITE" id="PS00031">
    <property type="entry name" value="NUCLEAR_REC_DBD_1"/>
    <property type="match status" value="1"/>
</dbReference>
<dbReference type="PROSITE" id="PS51030">
    <property type="entry name" value="NUCLEAR_REC_DBD_2"/>
    <property type="match status" value="1"/>
</dbReference>
<feature type="chain" id="PRO_0000053617" description="Estrogen receptor">
    <location>
        <begin position="1"/>
        <end position="594"/>
    </location>
</feature>
<feature type="domain" description="NR LBD" evidence="6">
    <location>
        <begin position="311"/>
        <end position="546"/>
    </location>
</feature>
<feature type="DNA-binding region" description="Nuclear receptor" evidence="5">
    <location>
        <begin position="185"/>
        <end position="250"/>
    </location>
</feature>
<feature type="zinc finger region" description="NR C4-type" evidence="5">
    <location>
        <begin position="185"/>
        <end position="205"/>
    </location>
</feature>
<feature type="zinc finger region" description="NR C4-type" evidence="5">
    <location>
        <begin position="221"/>
        <end position="245"/>
    </location>
</feature>
<feature type="region of interest" description="Modulating (transactivation AF-1); mediates interaction with MACROD1" evidence="1">
    <location>
        <begin position="1"/>
        <end position="184"/>
    </location>
</feature>
<feature type="region of interest" description="Interaction with DDX5; self-association" evidence="1">
    <location>
        <begin position="35"/>
        <end position="174"/>
    </location>
</feature>
<feature type="region of interest" description="Required for interaction with NCOA1" evidence="1">
    <location>
        <begin position="35"/>
        <end position="47"/>
    </location>
</feature>
<feature type="region of interest" description="Disordered" evidence="7">
    <location>
        <begin position="152"/>
        <end position="173"/>
    </location>
</feature>
<feature type="region of interest" description="Mediates interaction with DNTTIP2" evidence="1">
    <location>
        <begin position="185"/>
        <end position="310"/>
    </location>
</feature>
<feature type="region of interest" description="Hinge">
    <location>
        <begin position="251"/>
        <end position="310"/>
    </location>
</feature>
<feature type="region of interest" description="Disordered" evidence="7">
    <location>
        <begin position="257"/>
        <end position="293"/>
    </location>
</feature>
<feature type="region of interest" description="Interaction with AKAP13" evidence="1">
    <location>
        <begin position="262"/>
        <end position="594"/>
    </location>
</feature>
<feature type="region of interest" description="Self-association" evidence="1">
    <location>
        <begin position="264"/>
        <end position="594"/>
    </location>
</feature>
<feature type="region of interest" description="Transactivation AF-2" evidence="1">
    <location>
        <begin position="311"/>
        <end position="594"/>
    </location>
</feature>
<feature type="region of interest" description="Disordered" evidence="7">
    <location>
        <begin position="551"/>
        <end position="575"/>
    </location>
</feature>
<feature type="compositionally biased region" description="Basic and acidic residues" evidence="7">
    <location>
        <begin position="154"/>
        <end position="165"/>
    </location>
</feature>
<feature type="compositionally biased region" description="Basic residues" evidence="7">
    <location>
        <begin position="257"/>
        <end position="269"/>
    </location>
</feature>
<feature type="compositionally biased region" description="Basic and acidic residues" evidence="7">
    <location>
        <begin position="270"/>
        <end position="288"/>
    </location>
</feature>
<feature type="compositionally biased region" description="Polar residues" evidence="7">
    <location>
        <begin position="561"/>
        <end position="575"/>
    </location>
</feature>
<feature type="binding site" evidence="2">
    <location>
        <position position="353"/>
    </location>
    <ligand>
        <name>17beta-estradiol</name>
        <dbReference type="ChEBI" id="CHEBI:16469"/>
    </ligand>
</feature>
<feature type="binding site" evidence="2">
    <location>
        <position position="394"/>
    </location>
    <ligand>
        <name>17beta-estradiol</name>
        <dbReference type="ChEBI" id="CHEBI:16469"/>
    </ligand>
</feature>
<feature type="binding site" evidence="2">
    <location>
        <position position="523"/>
    </location>
    <ligand>
        <name>17beta-estradiol</name>
        <dbReference type="ChEBI" id="CHEBI:16469"/>
    </ligand>
</feature>
<feature type="modified residue" description="Phosphoserine; by CDK2" evidence="2">
    <location>
        <position position="104"/>
    </location>
</feature>
<feature type="modified residue" description="Phosphoserine; by CDK2" evidence="2">
    <location>
        <position position="106"/>
    </location>
</feature>
<feature type="modified residue" description="Phosphoserine" evidence="2">
    <location>
        <position position="118"/>
    </location>
</feature>
<feature type="modified residue" description="Phosphoserine; by CK2" evidence="2">
    <location>
        <position position="167"/>
    </location>
</feature>
<feature type="modified residue" description="Asymmetric dimethylarginine; by PRMT1" evidence="2">
    <location>
        <position position="260"/>
    </location>
</feature>
<feature type="modified residue" description="Phosphotyrosine; by Tyr-kinases" evidence="2">
    <location>
        <position position="536"/>
    </location>
</feature>
<feature type="lipid moiety-binding region" description="S-palmitoyl cysteine" evidence="1">
    <location>
        <position position="447"/>
    </location>
</feature>
<feature type="glycosylation site" description="O-linked (GlcNAc) serine" evidence="1">
    <location>
        <position position="10"/>
    </location>
</feature>
<feature type="glycosylation site" description="O-linked (GlcNAc) threonine" evidence="1">
    <location>
        <position position="570"/>
    </location>
</feature>
<accession>Q9TV98</accession>
<reference key="1">
    <citation type="submission" date="1999-01" db="EMBL/GenBank/DDBJ databases">
        <authorList>
            <person name="McDowell K.J."/>
            <person name="Adams M.H."/>
            <person name="Green M.L."/>
            <person name="Cleaver B.D."/>
            <person name="Sharp D.C."/>
        </authorList>
    </citation>
    <scope>NUCLEOTIDE SEQUENCE [MRNA]</scope>
</reference>
<sequence>MTMTLHTKASGMALLHQIQGNELETLNLPQFKIPLERPLGEVYVESSKPPVYDYPEGAAYDFNAAAAASASVYGQSGLAYGPGSEAAAFGANGLGGFPPLNSVSPSQLMLLHPPPQLSPYLHPPGQQVPYYLENEPSGYSVCEAGPQAFYRPNADNRRQGGRERLASSGDKGSMAMESAKETRYCAVCNDYASGYHYGVWSCEGCKAFFKRSIQGHNDYMCPATNQCTIDKNRRKSCQACRLRKCYEVGMMKGGIRKDRRGGRMLKHKRQRDDGEGRNEAGPSGDRRPANFWPSPLLIKHTKKISPVLSLTAEQMISALLDAEPPVLYSEYDATRPFNEASMMGLLTNLADRELVHMINWAKRVPGFVDLSLHDQVHLLECAWLEILMIGLVWRSMEHPGKLLFAPNLLLDRNQGKCVEGMVEIFDMLLATSSRLRMMNLQGEEFVCLKSIILLNSGVYTFLSSTLKSLEEKDHIHRVLDKMTDTLIHLMAKAGLTLQQHRRLAQLLLILSHIRHMSNKGMEHLYSMKCKNVVPLYDLLLEMLDAHRLHAPANHGGAPMEETNQSQLATTGSTSPHSMQTYYITGEAEGFPNTI</sequence>
<name>ESR1_HORSE</name>
<evidence type="ECO:0000250" key="1"/>
<evidence type="ECO:0000250" key="2">
    <source>
        <dbReference type="UniProtKB" id="P03372"/>
    </source>
</evidence>
<evidence type="ECO:0000250" key="3">
    <source>
        <dbReference type="UniProtKB" id="P06211"/>
    </source>
</evidence>
<evidence type="ECO:0000250" key="4">
    <source>
        <dbReference type="UniProtKB" id="P19785"/>
    </source>
</evidence>
<evidence type="ECO:0000255" key="5">
    <source>
        <dbReference type="PROSITE-ProRule" id="PRU00407"/>
    </source>
</evidence>
<evidence type="ECO:0000255" key="6">
    <source>
        <dbReference type="PROSITE-ProRule" id="PRU01189"/>
    </source>
</evidence>
<evidence type="ECO:0000256" key="7">
    <source>
        <dbReference type="SAM" id="MobiDB-lite"/>
    </source>
</evidence>
<evidence type="ECO:0000305" key="8"/>
<protein>
    <recommendedName>
        <fullName>Estrogen receptor</fullName>
        <shortName>ER</shortName>
    </recommendedName>
    <alternativeName>
        <fullName>ER-alpha</fullName>
    </alternativeName>
    <alternativeName>
        <fullName>Estradiol receptor</fullName>
    </alternativeName>
    <alternativeName>
        <fullName>Nuclear receptor subfamily 3 group A member 1</fullName>
    </alternativeName>
</protein>
<comment type="function">
    <text evidence="1 3">Nuclear hormone receptor. The steroid hormones and their receptors are involved in the regulation of eukaryotic gene expression and affect cellular proliferation and differentiation in target tissues. Ligand-dependent nuclear transactivation involves either direct homodimer binding to a palindromic estrogen response element (ERE) sequence or association with other DNA-binding transcription factors, such as AP-1/c-Jun, c-Fos, ATF-2, Sp1 and Sp3, to mediate ERE-independent signaling. Ligand binding induces a conformational change allowing subsequent or combinatorial association with multiprotein coactivator complexes through LXXLL motifs of their respective components. Mutual transrepression occurs between the estrogen receptor (ER) and NF-kappa-B in a cell-type specific manner. Decreases NF-kappa-B DNA-binding activity and inhibits NF-kappa-B-mediated transcription from the IL6 promoter and displace RELA/p65 and associated coregulators from the promoter. Recruited to the NF-kappa-B response element of the CCL2 and IL8 promoters and can displace CREBBP. Present with NF-kappa-B components RELA/p65 and NFKB1/p50 on ERE sequences. Can also act synergistically with NF-kappa-B to activate transcription involving respective recruitment adjacent response elements; the function involves CREBBP. Can activate the transcriptional activity of TFF1. Also mediates membrane-initiated estrogen signaling involving various kinase cascades. Essential for MTA1-mediated transcriptional regulation of BRCA1 and BCAS3 (By similarity). Maintains neuronal survival in response to ischemic reperfusion injury when in the presence of circulating estradiol (17-beta-estradiol/E2) (By similarity).</text>
</comment>
<comment type="subunit">
    <text evidence="2 3 4">Binds DNA as a homodimer. Can form a heterodimer with ESR2. Interacts with coactivator NCOA5. Interacts with PELP1, the interaction is enhanced by 17-beta-estradiol; the interaction increases ESR1 transcriptional activity (By similarity). Interacts with NCOA7; the interaction is ligand-inducible. Interacts with AKAP13, CUEDC2, HEXIM1, KDM5A, MAP1S, SMARD1, and UBE1C. Interacts with MUC1; the interaction is stimulated by 7 beta-estradiol (E2) and enhances ESR1-mediated transcription. Interacts with DNTTIP2, and UIMC1. Interacts with KMT2D/MLL2. Interacts with ATAD2; the interaction is enhanced by estradiol. Interacts with KIF18A and LDB1. Interacts with RLIM (via its C-terminus). Interacts with MACROD1. Interacts with SH2D4A and PLCG. Interacts with SH2D4A; the interaction blocks binding to PLCG and inhibits estrogen-induced cell proliferation. Interacts with DYNLL1. Interacts with CCDC62; the interaction requires estradiol and appears to enhance the transcription of target genes. Interacts with NR2C1; the interaction prevents homodimerization of ESR1 and suppresses its transcriptional activity and cell growth. Interacts with DNAAF4. Interacts with PRMT2. Interacts with RBFOX2. Interacts with EP300; the interaction is estrogen-dependent and enhanced by CITED1. Interacts with CITED1; the interaction is estrogen-dependent. Interacts with FAM120B, FOXL2, PHB2 and SLC30A9. Interacts with coactivators NCOA3 and NCOA6. Interacts with STK3/MST2 only in the presence of SAV1 and vice-versa. Binds to CSNK1D. Interacts with NCOA2; NCOA2 can interact with ESR1 AF-1 and AF-2 domains simultaneously and mediate their transcriptional synergy. Interacts with DDX5. Interacts with NCOA1; the interaction seems to require a self-association of N-terminal and C-terminal regions. Interacts with ZNF366, DDX17, NFKB1, RELA, SP1 and SP3. Interacts with NRIP1. Interacts with GPER1; the interaction occurs in an estrogen-dependent manner. Interacts with CLOCK and the interaction is stimulated by estrogen. Interacts with TRIP4 (ufmylated); estrogen dependent. Interacts with LMTK3; the interaction phosphorylates ESR1 (in vitro) and protects it against proteasomal degradation. Interacts with CCAR2 (via N-terminus) in a ligand-independent manner. Interacts with ZFHX3. Interacts with SFR1 in a ligand-dependent and -independent manner. Interacts with DCAF13, LATS1 and DCAF1; regulates ESR1 ubiquitination and ubiquitin-mediated proteasomal degradation. Interacts (via DNA-binding domain) with POU4F2 (C-terminus); this interaction increases the estrogen receptor ESR1 transcriptional activity in a DNA- and ligand 17-beta-estradiol-independent manner. Interacts with ESRRB isoform 1. Interacts with UBE3A and WBP2. Interacts with GTF2B. Interacts with RBM39. In the absence of hormonal ligand, interacts with TACC1 (By similarity). Interacts with PI3KR1 or PI3KR2 and PTK2/FAK1 (By similarity). Interacts with SRC (By similarity). Interacts with BAG1; the interaction is promoted in the absence of estradiol (17-beta-estradiol/E2) (By similarity). Interacts with and ubiquitinated by STUB1; the interaction is promoted in the absence of estradiol (17-beta-estradiol/E2) (By similarity). Interacts with NEDD8 (By similarity).</text>
</comment>
<comment type="subcellular location">
    <subcellularLocation>
        <location evidence="5">Nucleus</location>
    </subcellularLocation>
    <subcellularLocation>
        <location evidence="1">Cytoplasm</location>
    </subcellularLocation>
    <subcellularLocation>
        <location evidence="1">Golgi apparatus</location>
    </subcellularLocation>
    <subcellularLocation>
        <location evidence="1">Cell membrane</location>
    </subcellularLocation>
    <text evidence="1">Colocalizes with ZDHHC7 and ZDHHC21 in the Golgi apparatus where most probably palmitoylation occurs. Associated with the plasma membrane when palmitoylated.</text>
</comment>
<comment type="domain">
    <text evidence="1">Composed of three domains: a modulating N-terminal domain, a DNA-binding domain and a C-terminal ligand-binding domain. The modulating domain, also known as A/B or AF-1 domain has a ligand-independent transactivation function. The C-terminus contains a ligand-dependent transactivation domain, also known as E/F or AF-2 domain which overlaps with the ligand binding domain. AF-1 and AF-2 activate transcription independently and synergistically and act in a promoter- and cell-specific manner (By similarity).</text>
</comment>
<comment type="PTM">
    <text evidence="2 3">Ubiquitinated; regulated by LATS1 via DCAF1 it leads to ESR1 proteasomal degradation. Deubiquitinated by OTUB1 (By similarity). Ubiquitinated by STUB1/CHIP; in the CA1 hippocampal region following loss of endogenous circulating estradiol (17-beta-estradiol/E2) (By similarity). Ubiquitinated by UBR5, leading to its degradation: UBR5 specifically recognizes and binds ligand-bound ESR1 when it is not associated with coactivators (NCOAs). In presence of NCOAs, the UBR5-degron is not accessible, preventing its ubiquitination and degradation (By similarity).</text>
</comment>
<comment type="PTM">
    <text evidence="2">Phosphorylated by cyclin A/CDK2 and CK1. Phosphorylation probably enhances transcriptional activity. Dephosphorylation at Ser-118 by PPP5C inhibits its transactivation activity (By similarity). Phosphorylated by LMTK3 (in vitro) (By similarity).</text>
</comment>
<comment type="PTM">
    <text evidence="1">Palmitoylated at Cys-447 by ZDHHC7 and ZDHHC21. Palmitoylation is required for plasma membrane targeting and for rapid intracellular signaling via ERK and AKT kinases and cAMP generation, but not for signaling mediated by the nuclear hormone receptor (By similarity).</text>
</comment>
<comment type="PTM">
    <text evidence="2">Dimethylated by PRMT1 at Arg-260. The methylation may favor cytoplasmic localization. Demethylated by JMJD6 at Arg-260.</text>
</comment>
<comment type="similarity">
    <text evidence="8">Belongs to the nuclear hormone receptor family. NR3 subfamily.</text>
</comment>
<gene>
    <name type="primary">ESR1</name>
    <name type="synonym">ESR</name>
    <name type="synonym">NR3A1</name>
</gene>
<proteinExistence type="evidence at transcript level"/>
<organism>
    <name type="scientific">Equus caballus</name>
    <name type="common">Horse</name>
    <dbReference type="NCBI Taxonomy" id="9796"/>
    <lineage>
        <taxon>Eukaryota</taxon>
        <taxon>Metazoa</taxon>
        <taxon>Chordata</taxon>
        <taxon>Craniata</taxon>
        <taxon>Vertebrata</taxon>
        <taxon>Euteleostomi</taxon>
        <taxon>Mammalia</taxon>
        <taxon>Eutheria</taxon>
        <taxon>Laurasiatheria</taxon>
        <taxon>Perissodactyla</taxon>
        <taxon>Equidae</taxon>
        <taxon>Equus</taxon>
    </lineage>
</organism>
<keyword id="KW-0010">Activator</keyword>
<keyword id="KW-1003">Cell membrane</keyword>
<keyword id="KW-0963">Cytoplasm</keyword>
<keyword id="KW-0238">DNA-binding</keyword>
<keyword id="KW-0325">Glycoprotein</keyword>
<keyword id="KW-0333">Golgi apparatus</keyword>
<keyword id="KW-0446">Lipid-binding</keyword>
<keyword id="KW-0449">Lipoprotein</keyword>
<keyword id="KW-0472">Membrane</keyword>
<keyword id="KW-0479">Metal-binding</keyword>
<keyword id="KW-0488">Methylation</keyword>
<keyword id="KW-0539">Nucleus</keyword>
<keyword id="KW-0564">Palmitate</keyword>
<keyword id="KW-0597">Phosphoprotein</keyword>
<keyword id="KW-0675">Receptor</keyword>
<keyword id="KW-1185">Reference proteome</keyword>
<keyword id="KW-0754">Steroid-binding</keyword>
<keyword id="KW-0804">Transcription</keyword>
<keyword id="KW-0805">Transcription regulation</keyword>
<keyword id="KW-0832">Ubl conjugation</keyword>
<keyword id="KW-0862">Zinc</keyword>
<keyword id="KW-0863">Zinc-finger</keyword>